<gene>
    <name evidence="1" type="primary">rpmG</name>
    <name type="ordered locus">HAPS_2051</name>
</gene>
<evidence type="ECO:0000255" key="1">
    <source>
        <dbReference type="HAMAP-Rule" id="MF_00294"/>
    </source>
</evidence>
<evidence type="ECO:0000305" key="2"/>
<reference key="1">
    <citation type="journal article" date="2009" name="J. Bacteriol.">
        <title>Complete genome sequence of Haemophilus parasuis SH0165.</title>
        <authorList>
            <person name="Yue M."/>
            <person name="Yang F."/>
            <person name="Yang J."/>
            <person name="Bei W."/>
            <person name="Cai X."/>
            <person name="Chen L."/>
            <person name="Dong J."/>
            <person name="Zhou R."/>
            <person name="Jin M."/>
            <person name="Jin Q."/>
            <person name="Chen H."/>
        </authorList>
    </citation>
    <scope>NUCLEOTIDE SEQUENCE [LARGE SCALE GENOMIC DNA]</scope>
    <source>
        <strain>SH0165</strain>
    </source>
</reference>
<organism>
    <name type="scientific">Glaesserella parasuis serovar 5 (strain SH0165)</name>
    <name type="common">Haemophilus parasuis</name>
    <dbReference type="NCBI Taxonomy" id="557723"/>
    <lineage>
        <taxon>Bacteria</taxon>
        <taxon>Pseudomonadati</taxon>
        <taxon>Pseudomonadota</taxon>
        <taxon>Gammaproteobacteria</taxon>
        <taxon>Pasteurellales</taxon>
        <taxon>Pasteurellaceae</taxon>
        <taxon>Glaesserella</taxon>
    </lineage>
</organism>
<keyword id="KW-1185">Reference proteome</keyword>
<keyword id="KW-0687">Ribonucleoprotein</keyword>
<keyword id="KW-0689">Ribosomal protein</keyword>
<comment type="similarity">
    <text evidence="1">Belongs to the bacterial ribosomal protein bL33 family.</text>
</comment>
<feature type="chain" id="PRO_1000194057" description="Large ribosomal subunit protein bL33">
    <location>
        <begin position="1"/>
        <end position="56"/>
    </location>
</feature>
<accession>B8F859</accession>
<proteinExistence type="inferred from homology"/>
<dbReference type="EMBL" id="CP001321">
    <property type="protein sequence ID" value="ACL33511.1"/>
    <property type="molecule type" value="Genomic_DNA"/>
</dbReference>
<dbReference type="RefSeq" id="WP_005624479.1">
    <property type="nucleotide sequence ID" value="NC_011852.1"/>
</dbReference>
<dbReference type="SMR" id="B8F859"/>
<dbReference type="STRING" id="557723.HAPS_2051"/>
<dbReference type="GeneID" id="92743397"/>
<dbReference type="KEGG" id="hap:HAPS_2051"/>
<dbReference type="HOGENOM" id="CLU_190949_1_1_6"/>
<dbReference type="Proteomes" id="UP000006743">
    <property type="component" value="Chromosome"/>
</dbReference>
<dbReference type="GO" id="GO:0022625">
    <property type="term" value="C:cytosolic large ribosomal subunit"/>
    <property type="evidence" value="ECO:0007669"/>
    <property type="project" value="TreeGrafter"/>
</dbReference>
<dbReference type="GO" id="GO:0003735">
    <property type="term" value="F:structural constituent of ribosome"/>
    <property type="evidence" value="ECO:0007669"/>
    <property type="project" value="InterPro"/>
</dbReference>
<dbReference type="GO" id="GO:0006412">
    <property type="term" value="P:translation"/>
    <property type="evidence" value="ECO:0007669"/>
    <property type="project" value="UniProtKB-UniRule"/>
</dbReference>
<dbReference type="FunFam" id="2.20.28.120:FF:000001">
    <property type="entry name" value="50S ribosomal protein L33"/>
    <property type="match status" value="1"/>
</dbReference>
<dbReference type="Gene3D" id="2.20.28.120">
    <property type="entry name" value="Ribosomal protein L33"/>
    <property type="match status" value="1"/>
</dbReference>
<dbReference type="HAMAP" id="MF_00294">
    <property type="entry name" value="Ribosomal_bL33"/>
    <property type="match status" value="1"/>
</dbReference>
<dbReference type="InterPro" id="IPR001705">
    <property type="entry name" value="Ribosomal_bL33"/>
</dbReference>
<dbReference type="InterPro" id="IPR018264">
    <property type="entry name" value="Ribosomal_bL33_CS"/>
</dbReference>
<dbReference type="InterPro" id="IPR038584">
    <property type="entry name" value="Ribosomal_bL33_sf"/>
</dbReference>
<dbReference type="InterPro" id="IPR011332">
    <property type="entry name" value="Ribosomal_zn-bd"/>
</dbReference>
<dbReference type="NCBIfam" id="NF001860">
    <property type="entry name" value="PRK00595.1"/>
    <property type="match status" value="1"/>
</dbReference>
<dbReference type="NCBIfam" id="TIGR01023">
    <property type="entry name" value="rpmG_bact"/>
    <property type="match status" value="1"/>
</dbReference>
<dbReference type="PANTHER" id="PTHR15238">
    <property type="entry name" value="54S RIBOSOMAL PROTEIN L39, MITOCHONDRIAL"/>
    <property type="match status" value="1"/>
</dbReference>
<dbReference type="PANTHER" id="PTHR15238:SF1">
    <property type="entry name" value="LARGE RIBOSOMAL SUBUNIT PROTEIN BL33M"/>
    <property type="match status" value="1"/>
</dbReference>
<dbReference type="Pfam" id="PF00471">
    <property type="entry name" value="Ribosomal_L33"/>
    <property type="match status" value="1"/>
</dbReference>
<dbReference type="SUPFAM" id="SSF57829">
    <property type="entry name" value="Zn-binding ribosomal proteins"/>
    <property type="match status" value="1"/>
</dbReference>
<dbReference type="PROSITE" id="PS00582">
    <property type="entry name" value="RIBOSOMAL_L33"/>
    <property type="match status" value="1"/>
</dbReference>
<protein>
    <recommendedName>
        <fullName evidence="1">Large ribosomal subunit protein bL33</fullName>
    </recommendedName>
    <alternativeName>
        <fullName evidence="2">50S ribosomal protein L33</fullName>
    </alternativeName>
</protein>
<sequence length="56" mass="6550">MAAKGNREKIKLVSTAETGHFYTTTKNKRNMPEKMEIKKFDPVVRKHVVYKEAKIK</sequence>
<name>RL33_GLAP5</name>